<name>KI67_MOUSE</name>
<reference key="1">
    <citation type="journal article" date="1996" name="J. Cell Sci.">
        <title>The murine Ki-67 cell proliferation antigen accumulates in the nucleolar and heterochromatic regions of interphase cells and at the periphery of the mitotic chromosomes in a process essential for cell cycle progression.</title>
        <authorList>
            <person name="Starborg M."/>
            <person name="Gell K."/>
            <person name="Brundell E."/>
            <person name="Hoog C."/>
        </authorList>
    </citation>
    <scope>NUCLEOTIDE SEQUENCE [MRNA] (ISOFORM 2)</scope>
    <scope>SUBCELLULAR LOCATION</scope>
    <scope>TISSUE SPECIFICITY</scope>
    <scope>DEVELOPMENTAL STAGE</scope>
    <source>
        <strain>CBA/J</strain>
        <tissue>Testis</tissue>
    </source>
</reference>
<reference key="2">
    <citation type="journal article" date="2009" name="PLoS Biol.">
        <title>Lineage-specific biology revealed by a finished genome assembly of the mouse.</title>
        <authorList>
            <person name="Church D.M."/>
            <person name="Goodstadt L."/>
            <person name="Hillier L.W."/>
            <person name="Zody M.C."/>
            <person name="Goldstein S."/>
            <person name="She X."/>
            <person name="Bult C.J."/>
            <person name="Agarwala R."/>
            <person name="Cherry J.L."/>
            <person name="DiCuccio M."/>
            <person name="Hlavina W."/>
            <person name="Kapustin Y."/>
            <person name="Meric P."/>
            <person name="Maglott D."/>
            <person name="Birtle Z."/>
            <person name="Marques A.C."/>
            <person name="Graves T."/>
            <person name="Zhou S."/>
            <person name="Teague B."/>
            <person name="Potamousis K."/>
            <person name="Churas C."/>
            <person name="Place M."/>
            <person name="Herschleb J."/>
            <person name="Runnheim R."/>
            <person name="Forrest D."/>
            <person name="Amos-Landgraf J."/>
            <person name="Schwartz D.C."/>
            <person name="Cheng Z."/>
            <person name="Lindblad-Toh K."/>
            <person name="Eichler E.E."/>
            <person name="Ponting C.P."/>
        </authorList>
    </citation>
    <scope>NUCLEOTIDE SEQUENCE [LARGE SCALE GENOMIC DNA]</scope>
    <source>
        <strain>C57BL/6J</strain>
    </source>
</reference>
<reference key="3">
    <citation type="journal article" date="2004" name="Genome Res.">
        <title>The status, quality, and expansion of the NIH full-length cDNA project: the Mammalian Gene Collection (MGC).</title>
        <authorList>
            <consortium name="The MGC Project Team"/>
        </authorList>
    </citation>
    <scope>NUCLEOTIDE SEQUENCE [LARGE SCALE MRNA] OF 2379-3177</scope>
    <source>
        <tissue>Limb</tissue>
    </source>
</reference>
<reference key="4">
    <citation type="journal article" date="2002" name="Chromosoma">
        <title>The temporal and spatial distribution of the proliferation associated Ki-67 protein during female and male meiosis.</title>
        <authorList>
            <person name="Traut W."/>
            <person name="Endl E."/>
            <person name="Scholzen T."/>
            <person name="Gerdes J."/>
            <person name="Winking H."/>
        </authorList>
    </citation>
    <scope>SUBCELLULAR LOCATION</scope>
</reference>
<reference key="5">
    <citation type="journal article" date="2009" name="Immunity">
        <title>The phagosomal proteome in interferon-gamma-activated macrophages.</title>
        <authorList>
            <person name="Trost M."/>
            <person name="English L."/>
            <person name="Lemieux S."/>
            <person name="Courcelles M."/>
            <person name="Desjardins M."/>
            <person name="Thibault P."/>
        </authorList>
    </citation>
    <scope>PHOSPHORYLATION [LARGE SCALE ANALYSIS] AT SER-337; SER-373; SER-1587; SER-2545 AND THR-3021</scope>
    <scope>IDENTIFICATION BY MASS SPECTROMETRY [LARGE SCALE ANALYSIS]</scope>
</reference>
<reference key="6">
    <citation type="journal article" date="2010" name="Cell">
        <title>A tissue-specific atlas of mouse protein phosphorylation and expression.</title>
        <authorList>
            <person name="Huttlin E.L."/>
            <person name="Jedrychowski M.P."/>
            <person name="Elias J.E."/>
            <person name="Goswami T."/>
            <person name="Rad R."/>
            <person name="Beausoleil S.A."/>
            <person name="Villen J."/>
            <person name="Haas W."/>
            <person name="Sowa M.E."/>
            <person name="Gygi S.P."/>
        </authorList>
    </citation>
    <scope>PHOSPHORYLATION [LARGE SCALE ANALYSIS] AT SER-162; SER-276; SER-277; SER-286; SER-287; SER-503; SER-588; THR-1150; SER-1152; THR-1159; THR-1175; THR-1363; SER-1366; THR-1400; THR-1416; SER-1469; SER-1734; SER-1825; THR-1868; THR-1884; THR-1989; THR-2005; THR-2073; SER-2076; SER-2103; THR-2106; THR-2122; THR-2218; SER-2220; THR-2227; THR-2243; SER-2390; SER-2392; SER-2423; SER-2425; SER-2545; SER-2780 AND THR-3021</scope>
    <scope>IDENTIFICATION BY MASS SPECTROMETRY [LARGE SCALE ANALYSIS]</scope>
    <source>
        <tissue>Heart</tissue>
        <tissue>Kidney</tissue>
        <tissue>Lung</tissue>
        <tissue>Spleen</tissue>
        <tissue>Testis</tissue>
    </source>
</reference>
<reference key="7">
    <citation type="journal article" date="2013" name="Mol. Cell">
        <title>SIRT5-mediated lysine desuccinylation impacts diverse metabolic pathways.</title>
        <authorList>
            <person name="Park J."/>
            <person name="Chen Y."/>
            <person name="Tishkoff D.X."/>
            <person name="Peng C."/>
            <person name="Tan M."/>
            <person name="Dai L."/>
            <person name="Xie Z."/>
            <person name="Zhang Y."/>
            <person name="Zwaans B.M."/>
            <person name="Skinner M.E."/>
            <person name="Lombard D.B."/>
            <person name="Zhao Y."/>
        </authorList>
    </citation>
    <scope>ACETYLATION [LARGE SCALE ANALYSIS] AT LYS-2928</scope>
    <scope>IDENTIFICATION BY MASS SPECTROMETRY [LARGE SCALE ANALYSIS]</scope>
    <source>
        <tissue>Embryonic fibroblast</tissue>
    </source>
</reference>
<reference key="8">
    <citation type="journal article" date="2016" name="Elife">
        <title>The cell proliferation antigen Ki-67 organises heterochromatin.</title>
        <authorList>
            <person name="Sobecki M."/>
            <person name="Mrouj K."/>
            <person name="Camasses A."/>
            <person name="Parisis N."/>
            <person name="Nicolas E."/>
            <person name="Lleres D."/>
            <person name="Gerbe F."/>
            <person name="Prieto S."/>
            <person name="Krasinska L."/>
            <person name="David A."/>
            <person name="Eguren M."/>
            <person name="Birling M.C."/>
            <person name="Urbach S."/>
            <person name="Hem S."/>
            <person name="Dejardin J."/>
            <person name="Malumbres M."/>
            <person name="Jay P."/>
            <person name="Dulic V."/>
            <person name="Lafontaine D.L.J."/>
            <person name="Feil R."/>
            <person name="Fisher D."/>
        </authorList>
    </citation>
    <scope>FUNCTION</scope>
    <scope>DISRUPTION PHENOTYPE</scope>
</reference>
<reference key="9">
    <citation type="journal article" date="2016" name="Nature">
        <title>Ki-67 acts as a biological surfactant to disperse mitotic chromosomes.</title>
        <authorList>
            <person name="Cuylen S."/>
            <person name="Blaukopf C."/>
            <person name="Politi A.Z."/>
            <person name="Mueller-Reichert T."/>
            <person name="Neumann B."/>
            <person name="Poser I."/>
            <person name="Ellenberg J."/>
            <person name="Hyman A.A."/>
            <person name="Gerlich D.W."/>
        </authorList>
    </citation>
    <scope>FUNCTION</scope>
</reference>
<reference key="10">
    <citation type="journal article" date="2024" name="Cell Rep.">
        <title>PP2A-B55 phosphatase counteracts Ki-67-dependent chromosome individualization during mitosis.</title>
        <authorList>
            <person name="Sanz-Flores M."/>
            <person name="Ruiz-Torres M."/>
            <person name="Aguirre-Portoles C."/>
            <person name="El Bakkali A."/>
            <person name="Salvador-Barbero B."/>
            <person name="Villarroya-Beltri C."/>
            <person name="Ortega S."/>
            <person name="Megias D."/>
            <person name="Gerlich D.W."/>
            <person name="Alvarez-Fernandez M."/>
            <person name="Malumbres M."/>
        </authorList>
    </citation>
    <scope>DEPHOSPHORYLATION</scope>
</reference>
<comment type="function">
    <text evidence="1 6 7">Protein that associates with the surface of mitotic chromosomes and acts both as a chromosome repellent during early mitosis and chromosome attractant during late mitosis (PubMed:27362226). Required to maintain individual mitotic chromosomes dispersed in the cytoplasm following nuclear envelope disassembly (PubMed:27362226). During early mitosis, relocalizes from nucleoli to the chromosome surface where it forms extended brush structures that cover a substantial fraction of the chromosome surface (PubMed:27362226). The MKI67 brush structure prevents chromosomes from collapsing into a single chromatin mass by forming a steric and electrostatic charge barrier: the protein has a high net electrical charge and acts as a surfactant, dispersing chromosomes and enabling independent chromosome motility (PubMed:27362226). During mitotic anaphase, the MKI67 brush structure collapses and MKI67 switches from a chromosome repellent to a chromosome attractant to promote chromosome clustering and facilitate the exclusion of large cytoplasmic particles from the future nuclear space (By similarity). Mechanistically, dephosphorylation during mitotic exit and simultaneous exposure of a conserved basic patch induce the RNA-dependent formation of a liquid-like condensed phase on the chromosome surface, promoting coalescence of neighboring chromosome surfaces and clustering of chromosomes (By similarity). Binds premature ribosomal RNAs during anaphase; promoting liquid-liquid phase separation. Binds DNA, with a preference for supercoiled DNA and AT-rich DNA (By similarity). Does not contribute to the internal structure of mitotic chromosomes (PubMed:26949251). May play a role in chromatin organization; it is however unclear whether it plays a direct role in chromatin organization or whether it is an indirect consequence of its function in mitotic chromosome (PubMed:26949251).</text>
</comment>
<comment type="subunit">
    <text evidence="1">Interacts with KIF15. Interacts (via the FHA domain) with NIFK. Interacts with PPP1CC. Component of a complex at least composed of ZNF335, HCFC1, CCAR2, EMSY, MKI67, RBBP5, ASH2L and WDR5; the complex is formed as a result of interactions between components of a nuclear receptor-mediated transcription complex and a histone methylation complex. Interacts with ZNF335.</text>
</comment>
<comment type="subcellular location">
    <subcellularLocation>
        <location evidence="5 9">Chromosome</location>
    </subcellularLocation>
    <subcellularLocation>
        <location evidence="5 9">Nucleus</location>
    </subcellularLocation>
    <subcellularLocation>
        <location evidence="5 9">Nucleus</location>
        <location evidence="5 9">Nucleolus</location>
    </subcellularLocation>
    <text evidence="1 5 9">During early mitosis, relocalizes from nucleoli to the surface of the mitotic chromosome, the perichromosomal layer, and covers a substantial fraction of the mitotic chromosome surface (PubMed:12355204, PubMed:8834799). Associates with satellite DNA in G1 phase (By similarity). Binds tightly to chromatin in interphase, chromatin-binding decreases in mitosis when it associates with the surface of the condensed chromosomes (By similarity). Predominantly localized in the G1 phase in the perinucleolar region, in the later phases it is also detected throughout the nuclear interior, being predominantly localized in the nuclear matrix (By similarity).</text>
</comment>
<comment type="alternative products">
    <event type="alternative splicing"/>
    <isoform>
        <id>E9PVX6-1</id>
        <name>1</name>
        <sequence type="displayed"/>
    </isoform>
    <isoform>
        <id>E9PVX6-2</id>
        <name>2</name>
        <sequence type="described" ref="VSP_058551"/>
    </isoform>
</comment>
<comment type="tissue specificity">
    <text evidence="9">Mainly present in proliferating cells (at protein level).</text>
</comment>
<comment type="developmental stage">
    <text evidence="5 9">Accumulates during the late G1 stage in the nucleus and maximum expression is found during G2 phase and mitosis (PubMed:8834799). During male meiosis, present in nuclei of all stages from the spermatogonium through spermatocytes I and II up to the earliest spermatid stage (early round spermatids) and then fades out (PubMed:12355204). Not detected in later spermatid stages or sperm (PubMed:12355204). During female meiosis, present in prophase I oocytes of fetal ovaries, while it is absent in resting oocytes. Reappears in oocytes of growing follicles and is continuously present up to metaphase II (at protein level) (PubMed:12355204).</text>
</comment>
<comment type="domain">
    <text evidence="1">The positively charged patch (CP) region mediates liquid-liquid phase separation.</text>
</comment>
<comment type="PTM">
    <text evidence="1 8">Hyperphosphorylated by CDK1 in mitosis; hyperphosphorylatiom prevents undergoing liquid-liquid phase separation (By similarity). Dephosphorylated by PPP1CC at the onset of anaphase (By similarity). Dephosphorylation by protein phosphatase 2A (PP2A) and simultaneous exposure of the positively charged patch (CP) during mitotic exit induce the RNA-dependent formation of a liquid-like condensed phase on the chromosome surface (PubMed:39003739).</text>
</comment>
<comment type="PTM">
    <text evidence="1">Ubiquitinated by the APC/C complex after neuronal progenitors exit mitosis during brain development, leading to clearance from constitutive heterochromatin.</text>
</comment>
<comment type="disruption phenotype">
    <text evidence="6">No visible phenotype (PubMed:26949251). Mice were born at the expected Mendelian ratio and show no overt phenotype (PubMed:26949251). Cells do not show proliferation defects, but chromatin organization is impaired, with defects in heterochromatin compaction and long-range genomic interactions (PubMed:26949251).</text>
</comment>
<comment type="caution">
    <text evidence="6 7">Was thought to play a key role in cell proliferation, and is commonly used as a marker of cell proliferation. However, its primary function is uncoupled from cell proliferation (PubMed:26949251). Required to maintain mitotic chromosomes dispersed by forming a steric and electrostatic charge barrier (PubMed:27362226).</text>
</comment>
<comment type="sequence caution" evidence="10">
    <conflict type="frameshift">
        <sequence resource="EMBL-CDS" id="AAH53453"/>
    </conflict>
</comment>
<comment type="sequence caution" evidence="10">
    <conflict type="frameshift">
        <sequence resource="EMBL-CDS" id="CAA58026"/>
    </conflict>
</comment>
<comment type="online information" name="Protein Spotlight">
    <link uri="https://www.proteinspotlight.org/back_issues/186/"/>
    <text>The contours of heredity - Issue 186 of December 2016</text>
</comment>
<gene>
    <name evidence="11" type="primary">Mki67</name>
</gene>
<feature type="chain" id="PRO_0000437535" description="Proliferation marker protein Ki-67">
    <location>
        <begin position="1"/>
        <end position="3177"/>
    </location>
</feature>
<feature type="domain" description="FHA" evidence="3">
    <location>
        <begin position="27"/>
        <end position="76"/>
    </location>
</feature>
<feature type="domain" description="PP1-binding" evidence="2">
    <location>
        <begin position="462"/>
        <end position="509"/>
    </location>
</feature>
<feature type="repeat" description="K167R 1" evidence="2">
    <location>
        <begin position="994"/>
        <end position="1101"/>
    </location>
</feature>
<feature type="repeat" description="K167R 2" evidence="2">
    <location>
        <begin position="1108"/>
        <end position="1216"/>
    </location>
</feature>
<feature type="repeat" description="K167R 3" evidence="2">
    <location>
        <begin position="1228"/>
        <end position="1336"/>
    </location>
</feature>
<feature type="repeat" description="K167R 4" evidence="2">
    <location>
        <begin position="1348"/>
        <end position="1450"/>
    </location>
</feature>
<feature type="repeat" description="K167R 5" evidence="2">
    <location>
        <begin position="1461"/>
        <end position="1569"/>
    </location>
</feature>
<feature type="repeat" description="K167R 6" evidence="2">
    <location>
        <begin position="1582"/>
        <end position="1684"/>
    </location>
</feature>
<feature type="repeat" description="K167R 7" evidence="2">
    <location>
        <begin position="1696"/>
        <end position="1806"/>
    </location>
</feature>
<feature type="repeat" description="K167R 8" evidence="2">
    <location>
        <begin position="1817"/>
        <end position="1925"/>
    </location>
</feature>
<feature type="repeat" description="K167R 9" evidence="2">
    <location>
        <begin position="1937"/>
        <end position="2046"/>
    </location>
</feature>
<feature type="repeat" description="K167R 10" evidence="2">
    <location>
        <begin position="2059"/>
        <end position="2163"/>
    </location>
</feature>
<feature type="repeat" description="K167R 11" evidence="2">
    <location>
        <begin position="2175"/>
        <end position="2284"/>
    </location>
</feature>
<feature type="repeat" description="K167R 12" evidence="2">
    <location>
        <begin position="2296"/>
        <end position="2405"/>
    </location>
</feature>
<feature type="repeat" description="K167R 13" evidence="2">
    <location>
        <begin position="2419"/>
        <end position="2526"/>
    </location>
</feature>
<feature type="repeat" description="K167R 14" evidence="2">
    <location>
        <begin position="2537"/>
        <end position="2639"/>
    </location>
</feature>
<feature type="repeat" description="K167R 15" evidence="2">
    <location>
        <begin position="2643"/>
        <end position="2748"/>
    </location>
</feature>
<feature type="repeat" description="K167R 16" evidence="2">
    <location>
        <begin position="2762"/>
        <end position="2870"/>
    </location>
</feature>
<feature type="region of interest" description="Disordered" evidence="4">
    <location>
        <begin position="98"/>
        <end position="442"/>
    </location>
</feature>
<feature type="region of interest" description="Positively charged patch (CP)" evidence="1">
    <location>
        <begin position="455"/>
        <end position="618"/>
    </location>
</feature>
<feature type="region of interest" description="Disordered" evidence="4">
    <location>
        <begin position="473"/>
        <end position="572"/>
    </location>
</feature>
<feature type="region of interest" description="Disordered" evidence="4">
    <location>
        <begin position="614"/>
        <end position="652"/>
    </location>
</feature>
<feature type="region of interest" description="Disordered" evidence="4">
    <location>
        <begin position="793"/>
        <end position="815"/>
    </location>
</feature>
<feature type="region of interest" description="Disordered" evidence="4">
    <location>
        <begin position="835"/>
        <end position="901"/>
    </location>
</feature>
<feature type="region of interest" description="Disordered" evidence="4">
    <location>
        <begin position="956"/>
        <end position="989"/>
    </location>
</feature>
<feature type="region of interest" description="Disordered" evidence="4">
    <location>
        <begin position="1109"/>
        <end position="1321"/>
    </location>
</feature>
<feature type="region of interest" description="Disordered" evidence="4">
    <location>
        <begin position="1334"/>
        <end position="1410"/>
    </location>
</feature>
<feature type="region of interest" description="Disordered" evidence="4">
    <location>
        <begin position="1526"/>
        <end position="1550"/>
    </location>
</feature>
<feature type="region of interest" description="Disordered" evidence="4">
    <location>
        <begin position="1749"/>
        <end position="1797"/>
    </location>
</feature>
<feature type="region of interest" description="Disordered" evidence="4">
    <location>
        <begin position="1925"/>
        <end position="2033"/>
    </location>
</feature>
<feature type="region of interest" description="Disordered" evidence="4">
    <location>
        <begin position="2047"/>
        <end position="2112"/>
    </location>
</feature>
<feature type="region of interest" description="Disordered" evidence="4">
    <location>
        <begin position="2124"/>
        <end position="2343"/>
    </location>
</feature>
<feature type="region of interest" description="Disordered" evidence="4">
    <location>
        <begin position="2378"/>
        <end position="2447"/>
    </location>
</feature>
<feature type="region of interest" description="Disordered" evidence="4">
    <location>
        <begin position="2538"/>
        <end position="2828"/>
    </location>
</feature>
<feature type="region of interest" description="Disordered" evidence="4">
    <location>
        <begin position="2879"/>
        <end position="3160"/>
    </location>
</feature>
<feature type="compositionally biased region" description="Basic and acidic residues" evidence="4">
    <location>
        <begin position="98"/>
        <end position="107"/>
    </location>
</feature>
<feature type="compositionally biased region" description="Basic and acidic residues" evidence="4">
    <location>
        <begin position="116"/>
        <end position="126"/>
    </location>
</feature>
<feature type="compositionally biased region" description="Polar residues" evidence="4">
    <location>
        <begin position="165"/>
        <end position="177"/>
    </location>
</feature>
<feature type="compositionally biased region" description="Polar residues" evidence="4">
    <location>
        <begin position="202"/>
        <end position="221"/>
    </location>
</feature>
<feature type="compositionally biased region" description="Basic and acidic residues" evidence="4">
    <location>
        <begin position="235"/>
        <end position="263"/>
    </location>
</feature>
<feature type="compositionally biased region" description="Polar residues" evidence="4">
    <location>
        <begin position="276"/>
        <end position="286"/>
    </location>
</feature>
<feature type="compositionally biased region" description="Basic residues" evidence="4">
    <location>
        <begin position="616"/>
        <end position="634"/>
    </location>
</feature>
<feature type="compositionally biased region" description="Polar residues" evidence="4">
    <location>
        <begin position="636"/>
        <end position="652"/>
    </location>
</feature>
<feature type="compositionally biased region" description="Polar residues" evidence="4">
    <location>
        <begin position="855"/>
        <end position="864"/>
    </location>
</feature>
<feature type="compositionally biased region" description="Basic and acidic residues" evidence="4">
    <location>
        <begin position="867"/>
        <end position="882"/>
    </location>
</feature>
<feature type="compositionally biased region" description="Basic and acidic residues" evidence="4">
    <location>
        <begin position="975"/>
        <end position="989"/>
    </location>
</feature>
<feature type="compositionally biased region" description="Polar residues" evidence="4">
    <location>
        <begin position="1114"/>
        <end position="1127"/>
    </location>
</feature>
<feature type="compositionally biased region" description="Basic residues" evidence="4">
    <location>
        <begin position="1308"/>
        <end position="1317"/>
    </location>
</feature>
<feature type="compositionally biased region" description="Polar residues" evidence="4">
    <location>
        <begin position="1353"/>
        <end position="1368"/>
    </location>
</feature>
<feature type="compositionally biased region" description="Basic and acidic residues" evidence="4">
    <location>
        <begin position="1371"/>
        <end position="1384"/>
    </location>
</feature>
<feature type="compositionally biased region" description="Polar residues" evidence="4">
    <location>
        <begin position="1765"/>
        <end position="1782"/>
    </location>
</feature>
<feature type="compositionally biased region" description="Polar residues" evidence="4">
    <location>
        <begin position="2063"/>
        <end position="2078"/>
    </location>
</feature>
<feature type="compositionally biased region" description="Basic and acidic residues" evidence="4">
    <location>
        <begin position="2088"/>
        <end position="2101"/>
    </location>
</feature>
<feature type="compositionally biased region" description="Basic residues" evidence="4">
    <location>
        <begin position="2135"/>
        <end position="2144"/>
    </location>
</feature>
<feature type="compositionally biased region" description="Polar residues" evidence="4">
    <location>
        <begin position="2180"/>
        <end position="2195"/>
    </location>
</feature>
<feature type="compositionally biased region" description="Basic residues" evidence="4">
    <location>
        <begin position="2378"/>
        <end position="2390"/>
    </location>
</feature>
<feature type="compositionally biased region" description="Basic and acidic residues" evidence="4">
    <location>
        <begin position="2538"/>
        <end position="2547"/>
    </location>
</feature>
<feature type="compositionally biased region" description="Polar residues" evidence="4">
    <location>
        <begin position="2605"/>
        <end position="2622"/>
    </location>
</feature>
<feature type="compositionally biased region" description="Basic and acidic residues" evidence="4">
    <location>
        <begin position="2673"/>
        <end position="2697"/>
    </location>
</feature>
<feature type="compositionally biased region" description="Basic and acidic residues" evidence="4">
    <location>
        <begin position="2704"/>
        <end position="2714"/>
    </location>
</feature>
<feature type="compositionally biased region" description="Polar residues" evidence="4">
    <location>
        <begin position="2764"/>
        <end position="2781"/>
    </location>
</feature>
<feature type="compositionally biased region" description="Polar residues" evidence="4">
    <location>
        <begin position="2883"/>
        <end position="2892"/>
    </location>
</feature>
<feature type="compositionally biased region" description="Basic and acidic residues" evidence="4">
    <location>
        <begin position="2907"/>
        <end position="2923"/>
    </location>
</feature>
<feature type="compositionally biased region" description="Basic and acidic residues" evidence="4">
    <location>
        <begin position="2959"/>
        <end position="2971"/>
    </location>
</feature>
<feature type="compositionally biased region" description="Basic and acidic residues" evidence="4">
    <location>
        <begin position="3008"/>
        <end position="3018"/>
    </location>
</feature>
<feature type="compositionally biased region" description="Basic and acidic residues" evidence="4">
    <location>
        <begin position="3039"/>
        <end position="3057"/>
    </location>
</feature>
<feature type="compositionally biased region" description="Polar residues" evidence="4">
    <location>
        <begin position="3058"/>
        <end position="3067"/>
    </location>
</feature>
<feature type="compositionally biased region" description="Basic and acidic residues" evidence="4">
    <location>
        <begin position="3118"/>
        <end position="3132"/>
    </location>
</feature>
<feature type="compositionally biased region" description="Basic and acidic residues" evidence="4">
    <location>
        <begin position="3140"/>
        <end position="3160"/>
    </location>
</feature>
<feature type="binding site" evidence="2">
    <location>
        <begin position="2973"/>
        <end position="2980"/>
    </location>
    <ligand>
        <name>ATP</name>
        <dbReference type="ChEBI" id="CHEBI:30616"/>
    </ligand>
</feature>
<feature type="modified residue" description="Phosphoserine" evidence="1">
    <location>
        <position position="125"/>
    </location>
</feature>
<feature type="modified residue" description="Phosphoserine" evidence="1">
    <location>
        <position position="128"/>
    </location>
</feature>
<feature type="modified residue" description="Phosphoserine" evidence="13">
    <location>
        <position position="162"/>
    </location>
</feature>
<feature type="modified residue" description="Phosphoserine" evidence="1">
    <location>
        <position position="250"/>
    </location>
</feature>
<feature type="modified residue" description="Phosphoserine" evidence="13">
    <location>
        <position position="276"/>
    </location>
</feature>
<feature type="modified residue" description="Phosphoserine" evidence="13">
    <location>
        <position position="277"/>
    </location>
</feature>
<feature type="modified residue" description="Phosphoserine" evidence="13">
    <location>
        <position position="286"/>
    </location>
</feature>
<feature type="modified residue" description="Phosphoserine" evidence="13">
    <location>
        <position position="287"/>
    </location>
</feature>
<feature type="modified residue" description="Phosphothreonine" evidence="1">
    <location>
        <position position="307"/>
    </location>
</feature>
<feature type="modified residue" description="Phosphothreonine" evidence="1">
    <location>
        <position position="316"/>
    </location>
</feature>
<feature type="modified residue" description="Phosphoserine" evidence="1">
    <location>
        <position position="321"/>
    </location>
</feature>
<feature type="modified residue" description="Phosphoserine" evidence="12">
    <location>
        <position position="337"/>
    </location>
</feature>
<feature type="modified residue" description="Phosphoserine" evidence="12">
    <location>
        <position position="373"/>
    </location>
</feature>
<feature type="modified residue" description="Phosphoserine" evidence="1">
    <location>
        <position position="498"/>
    </location>
</feature>
<feature type="modified residue" description="Phosphoserine" evidence="13">
    <location>
        <position position="503"/>
    </location>
</feature>
<feature type="modified residue" description="Phosphoserine" evidence="13">
    <location>
        <position position="588"/>
    </location>
</feature>
<feature type="modified residue" description="Phosphothreonine" evidence="1">
    <location>
        <position position="701"/>
    </location>
</feature>
<feature type="modified residue" description="Phosphoserine" evidence="1">
    <location>
        <position position="1062"/>
    </location>
</feature>
<feature type="modified residue" description="Phosphoserine" evidence="1">
    <location>
        <position position="1114"/>
    </location>
</feature>
<feature type="modified residue" description="Phosphothreonine" evidence="1">
    <location>
        <position position="1122"/>
    </location>
</feature>
<feature type="modified residue" description="Phosphoserine" evidence="1">
    <location>
        <position position="1125"/>
    </location>
</feature>
<feature type="modified residue" description="Phosphothreonine" evidence="13">
    <location>
        <position position="1150"/>
    </location>
</feature>
<feature type="modified residue" description="Phosphoserine" evidence="13">
    <location>
        <position position="1152"/>
    </location>
</feature>
<feature type="modified residue" description="Phosphothreonine" evidence="13">
    <location>
        <position position="1159"/>
    </location>
</feature>
<feature type="modified residue" description="Phosphothreonine" evidence="13">
    <location>
        <position position="1175"/>
    </location>
</feature>
<feature type="modified residue" description="Phosphoserine" evidence="1">
    <location>
        <position position="1189"/>
    </location>
</feature>
<feature type="modified residue" description="Phosphothreonine" evidence="1">
    <location>
        <position position="1215"/>
    </location>
</feature>
<feature type="modified residue" description="Phosphoserine" evidence="1">
    <location>
        <position position="1235"/>
    </location>
</feature>
<feature type="modified residue" description="Phosphothreonine" evidence="1">
    <location>
        <position position="1243"/>
    </location>
</feature>
<feature type="modified residue" description="Phosphothreonine" evidence="1">
    <location>
        <position position="1279"/>
    </location>
</feature>
<feature type="modified residue" description="Phosphothreonine" evidence="1">
    <location>
        <position position="1295"/>
    </location>
</feature>
<feature type="modified residue" description="Phosphothreonine" evidence="1">
    <location>
        <position position="1307"/>
    </location>
</feature>
<feature type="modified residue" description="Phosphothreonine" evidence="1">
    <location>
        <position position="1315"/>
    </location>
</feature>
<feature type="modified residue" description="Phosphothreonine" evidence="1">
    <location>
        <position position="1335"/>
    </location>
</feature>
<feature type="modified residue" description="Phosphoserine" evidence="1">
    <location>
        <position position="1356"/>
    </location>
</feature>
<feature type="modified residue" description="Phosphothreonine" evidence="13">
    <location>
        <position position="1363"/>
    </location>
</feature>
<feature type="modified residue" description="Phosphoserine" evidence="13">
    <location>
        <position position="1366"/>
    </location>
</feature>
<feature type="modified residue" description="Phosphothreonine" evidence="13">
    <location>
        <position position="1400"/>
    </location>
</feature>
<feature type="modified residue" description="Phosphothreonine" evidence="13">
    <location>
        <position position="1416"/>
    </location>
</feature>
<feature type="modified residue" description="Phosphoserine" evidence="13">
    <location>
        <position position="1469"/>
    </location>
</feature>
<feature type="modified residue" description="Phosphothreonine" evidence="1">
    <location>
        <position position="1477"/>
    </location>
</feature>
<feature type="modified residue" description="Phosphoserine" evidence="1">
    <location>
        <position position="1480"/>
    </location>
</feature>
<feature type="modified residue" description="Phosphothreonine" evidence="1">
    <location>
        <position position="1513"/>
    </location>
</feature>
<feature type="modified residue" description="Phosphoserine" evidence="1">
    <location>
        <position position="1542"/>
    </location>
</feature>
<feature type="modified residue" description="Phosphoserine" evidence="12">
    <location>
        <position position="1587"/>
    </location>
</feature>
<feature type="modified residue" description="N6-acetyllysine" evidence="1">
    <location>
        <position position="1609"/>
    </location>
</feature>
<feature type="modified residue" description="Phosphothreonine" evidence="1">
    <location>
        <position position="1684"/>
    </location>
</feature>
<feature type="modified residue" description="Phosphothreonine" evidence="1">
    <location>
        <position position="1712"/>
    </location>
</feature>
<feature type="modified residue" description="Phosphoserine" evidence="13">
    <location>
        <position position="1734"/>
    </location>
</feature>
<feature type="modified residue" description="Phosphothreonine" evidence="1">
    <location>
        <position position="1766"/>
    </location>
</feature>
<feature type="modified residue" description="Phosphoserine" evidence="1">
    <location>
        <position position="1779"/>
    </location>
</feature>
<feature type="modified residue" description="Phosphothreonine" evidence="1">
    <location>
        <position position="1805"/>
    </location>
</feature>
<feature type="modified residue" description="Phosphoserine" evidence="13">
    <location>
        <position position="1825"/>
    </location>
</feature>
<feature type="modified residue" description="Phosphothreonine" evidence="1">
    <location>
        <position position="1859"/>
    </location>
</feature>
<feature type="modified residue" description="Phosphothreonine" evidence="13">
    <location>
        <position position="1868"/>
    </location>
</feature>
<feature type="modified residue" description="Phosphothreonine" evidence="13">
    <location>
        <position position="1884"/>
    </location>
</feature>
<feature type="modified residue" description="Phosphothreonine" evidence="1">
    <location>
        <position position="1924"/>
    </location>
</feature>
<feature type="modified residue" description="Phosphoserine" evidence="1">
    <location>
        <position position="1944"/>
    </location>
</feature>
<feature type="modified residue" description="N6-acetyllysine" evidence="1">
    <location>
        <position position="1966"/>
    </location>
</feature>
<feature type="modified residue" description="Phosphothreonine" evidence="13">
    <location>
        <position position="1989"/>
    </location>
</feature>
<feature type="modified residue" description="Phosphothreonine" evidence="13">
    <location>
        <position position="2005"/>
    </location>
</feature>
<feature type="modified residue" description="Phosphothreonine" evidence="1">
    <location>
        <position position="2025"/>
    </location>
</feature>
<feature type="modified residue" description="Phosphothreonine" evidence="1">
    <location>
        <position position="2045"/>
    </location>
</feature>
<feature type="modified residue" description="Phosphoserine" evidence="1">
    <location>
        <position position="2065"/>
    </location>
</feature>
<feature type="modified residue" description="Phosphothreonine" evidence="13">
    <location>
        <position position="2073"/>
    </location>
</feature>
<feature type="modified residue" description="Phosphoserine" evidence="13">
    <location>
        <position position="2076"/>
    </location>
</feature>
<feature type="modified residue" description="Phosphoserine" evidence="1">
    <location>
        <position position="2095"/>
    </location>
</feature>
<feature type="modified residue" description="Phosphoserine" evidence="13">
    <location>
        <position position="2103"/>
    </location>
</feature>
<feature type="modified residue" description="Phosphothreonine" evidence="13">
    <location>
        <position position="2106"/>
    </location>
</feature>
<feature type="modified residue" description="Phosphothreonine" evidence="13">
    <location>
        <position position="2122"/>
    </location>
</feature>
<feature type="modified residue" description="Phosphothreonine" evidence="1">
    <location>
        <position position="2162"/>
    </location>
</feature>
<feature type="modified residue" description="Phosphoserine" evidence="1">
    <location>
        <position position="2182"/>
    </location>
</feature>
<feature type="modified residue" description="Phosphothreonine" evidence="1">
    <location>
        <position position="2190"/>
    </location>
</feature>
<feature type="modified residue" description="Phosphoserine" evidence="1">
    <location>
        <position position="2198"/>
    </location>
</feature>
<feature type="modified residue" description="Phosphothreonine" evidence="13">
    <location>
        <position position="2218"/>
    </location>
</feature>
<feature type="modified residue" description="Phosphoserine" evidence="13">
    <location>
        <position position="2220"/>
    </location>
</feature>
<feature type="modified residue" description="Phosphothreonine" evidence="13">
    <location>
        <position position="2227"/>
    </location>
</feature>
<feature type="modified residue" description="Phosphothreonine" evidence="13">
    <location>
        <position position="2243"/>
    </location>
</feature>
<feature type="modified residue" description="Phosphothreonine" evidence="1">
    <location>
        <position position="2283"/>
    </location>
</feature>
<feature type="modified residue" description="Phosphoserine" evidence="1">
    <location>
        <position position="2303"/>
    </location>
</feature>
<feature type="modified residue" description="Phosphothreonine" evidence="1">
    <location>
        <position position="2311"/>
    </location>
</feature>
<feature type="modified residue" description="Phosphothreonine" evidence="1">
    <location>
        <position position="2348"/>
    </location>
</feature>
<feature type="modified residue" description="Phosphoserine" evidence="13">
    <location>
        <position position="2390"/>
    </location>
</feature>
<feature type="modified residue" description="Phosphoserine" evidence="13">
    <location>
        <position position="2392"/>
    </location>
</feature>
<feature type="modified residue" description="Phosphothreonine" evidence="1">
    <location>
        <position position="2405"/>
    </location>
</feature>
<feature type="modified residue" description="Phosphoserine" evidence="13">
    <location>
        <position position="2423"/>
    </location>
</feature>
<feature type="modified residue" description="Phosphoserine" evidence="13">
    <location>
        <position position="2425"/>
    </location>
</feature>
<feature type="modified residue" description="Phosphoserine" evidence="1">
    <location>
        <position position="2464"/>
    </location>
</feature>
<feature type="modified residue" description="Phosphoserine" evidence="1">
    <location>
        <position position="2487"/>
    </location>
</feature>
<feature type="modified residue" description="Phosphoserine" evidence="12 13">
    <location>
        <position position="2545"/>
    </location>
</feature>
<feature type="modified residue" description="Phosphoserine" evidence="1">
    <location>
        <position position="2592"/>
    </location>
</feature>
<feature type="modified residue" description="Phosphoserine" evidence="1">
    <location>
        <position position="2649"/>
    </location>
</feature>
<feature type="modified residue" description="Phosphoserine" evidence="1">
    <location>
        <position position="2768"/>
    </location>
</feature>
<feature type="modified residue" description="Phosphoserine" evidence="13">
    <location>
        <position position="2780"/>
    </location>
</feature>
<feature type="modified residue" description="N6-acetyllysine" evidence="14">
    <location>
        <position position="2928"/>
    </location>
</feature>
<feature type="modified residue" description="Phosphoserine" evidence="1">
    <location>
        <position position="2980"/>
    </location>
</feature>
<feature type="modified residue" description="Phosphothreonine" evidence="12 13">
    <location>
        <position position="3021"/>
    </location>
</feature>
<feature type="modified residue" description="Phosphoserine" evidence="1">
    <location>
        <position position="3061"/>
    </location>
</feature>
<feature type="cross-link" description="Glycyl lysine isopeptide (Lys-Gly) (interchain with G-Cter in SUMO2)" evidence="1">
    <location>
        <position position="236"/>
    </location>
</feature>
<feature type="cross-link" description="Glycyl lysine isopeptide (Lys-Gly) (interchain with G-Cter in SUMO2)" evidence="1">
    <location>
        <position position="1013"/>
    </location>
</feature>
<feature type="cross-link" description="Glycyl lysine isopeptide (Lys-Gly) (interchain with G-Cter in SUMO2)" evidence="1">
    <location>
        <position position="1026"/>
    </location>
</feature>
<feature type="cross-link" description="Glycyl lysine isopeptide (Lys-Gly) (interchain with G-Cter in SUMO1); alternate" evidence="1">
    <location>
        <position position="1082"/>
    </location>
</feature>
<feature type="cross-link" description="Glycyl lysine isopeptide (Lys-Gly) (interchain with G-Cter in SUMO2); alternate" evidence="1">
    <location>
        <position position="1082"/>
    </location>
</feature>
<feature type="cross-link" description="Glycyl lysine isopeptide (Lys-Gly) (interchain with G-Cter in SUMO2)" evidence="1">
    <location>
        <position position="1317"/>
    </location>
</feature>
<feature type="cross-link" description="Glycyl lysine isopeptide (Lys-Gly) (interchain with G-Cter in SUMO2)" evidence="1">
    <location>
        <position position="1668"/>
    </location>
</feature>
<feature type="cross-link" description="Glycyl lysine isopeptide (Lys-Gly) (interchain with G-Cter in SUMO1); alternate" evidence="1">
    <location>
        <position position="2027"/>
    </location>
</feature>
<feature type="cross-link" description="Glycyl lysine isopeptide (Lys-Gly) (interchain with G-Cter in SUMO2); alternate" evidence="1">
    <location>
        <position position="2027"/>
    </location>
</feature>
<feature type="cross-link" description="Glycyl lysine isopeptide (Lys-Gly) (interchain with G-Cter in SUMO1)" evidence="1">
    <location>
        <position position="2451"/>
    </location>
</feature>
<feature type="cross-link" description="Glycyl lysine isopeptide (Lys-Gly) (interchain with G-Cter in SUMO1); alternate" evidence="1">
    <location>
        <position position="2675"/>
    </location>
</feature>
<feature type="cross-link" description="Glycyl lysine isopeptide (Lys-Gly) (interchain with G-Cter in SUMO2); alternate" evidence="1">
    <location>
        <position position="2675"/>
    </location>
</feature>
<feature type="cross-link" description="Glycyl lysine isopeptide (Lys-Gly) (interchain with G-Cter in SUMO2)" evidence="1">
    <location>
        <position position="2909"/>
    </location>
</feature>
<feature type="splice variant" id="VSP_058551" description="In isoform 2.">
    <location>
        <begin position="1150"/>
        <end position="1390"/>
    </location>
</feature>
<feature type="sequence conflict" description="In Ref. 1; CAA58026." evidence="10" ref="1">
    <original>E</original>
    <variation>G</variation>
    <location>
        <position position="344"/>
    </location>
</feature>
<feature type="sequence conflict" description="In Ref. 1; CAA58026." evidence="10" ref="1">
    <original>AA</original>
    <variation>TP</variation>
    <location>
        <begin position="364"/>
        <end position="365"/>
    </location>
</feature>
<feature type="sequence conflict" description="In Ref. 1; CAA58026." evidence="10" ref="1">
    <original>A</original>
    <variation>G</variation>
    <location>
        <position position="372"/>
    </location>
</feature>
<feature type="sequence conflict" description="In Ref. 1; CAA58026." evidence="10" ref="1">
    <original>KK</original>
    <variation>PQ</variation>
    <location>
        <begin position="384"/>
        <end position="385"/>
    </location>
</feature>
<feature type="sequence conflict" description="In Ref. 1; CAA58026." evidence="10" ref="1">
    <original>K</original>
    <variation>N</variation>
    <location>
        <position position="401"/>
    </location>
</feature>
<feature type="sequence conflict" description="In Ref. 1; CAA58026." evidence="10" ref="1">
    <original>K</original>
    <variation>N</variation>
    <location>
        <position position="546"/>
    </location>
</feature>
<feature type="sequence conflict" description="In Ref. 1; CAA58026." evidence="10" ref="1">
    <original>Q</original>
    <variation>P</variation>
    <location>
        <position position="622"/>
    </location>
</feature>
<feature type="sequence conflict" description="In Ref. 1; CAA58026." evidence="10" ref="1">
    <original>E</original>
    <variation>G</variation>
    <location>
        <position position="1079"/>
    </location>
</feature>
<feature type="sequence conflict" description="In Ref. 1; CAA58026." evidence="10" ref="1">
    <original>D</original>
    <variation>V</variation>
    <location>
        <position position="2911"/>
    </location>
</feature>
<feature type="sequence conflict" description="In Ref. 1; CAA58026." evidence="10" ref="1">
    <original>H</original>
    <variation>Y</variation>
    <location>
        <position position="2978"/>
    </location>
</feature>
<accession>E9PVX6</accession>
<accession>Q61769</accession>
<accession>Q7TSF6</accession>
<sequence>MASSAHLVTIKRSGDDGAHFPLSLSSCLFGRSIECDIRIQLPVVSKRHCKIEVKEQEAILYNFSSTNPTQVNGVTIDEPVRLRHGDIITIIDRSFRYEDGNHEDGSKPTEFPGKSLGKEPSRRASRDSFCADPDGEGQDTKASKMTASRRSFVYAKGLSADSPASDGSKNSVSQDSSGHVEQHTGRNIVEPTSGDLFKKSRSTGSSYREPKSSPTQSLSNSNEKESPFEKLYQSMKEELDVKSQKSCRKSEPQPDRAAEESRETQLLVSGRARAKSSGSTPVTAASSPKVGKIWTERWRGGMVPVQTSTETAKMKTPVRHSQQLKDEDSRVTGRRHSVNLDEGESAQAVHKTVTPGKLATRNQAAVEAGDVASPADTPEHSSSKKRSIPAKVEAPSAETQKRLSLTQRLVPGEKKTPKGSFSKPEKLATAAEQTCSGLPGLSSVDISNFGDSINKSEGMPMKRRRVSFGGHLRPELFDENLPPNTPLKRGETPTKRKSLGTHSPAVLKTIIKERPQSPGKQESPGITPPRTNDQRRRSGRTSSGSKFLCETDIPKKAGRKSGNLPAKRASISRSQHGILQMICSKRRSGASEANLIVAKSWADVVKLGVKQTQTKVAKHVPQKQTSKRQRRPSTPKKPTSNLHNQFTTGHANSPCTIVVGRAQIEKVSVPARPYKMLNNLMLNRKVDFSEDLSGLTEMFKTPVKEKQQQMSDTGSVLSNSANLSERQLQVTNSGDIPEPITTEILGEKVLSSTRNAAKQQSDRYSASPTLRRRSIKHENTVQTPKNVHNITDLEKKTPVSETEPLKTASSVSKLRRSRELRHTLVETMNEKTEAVLAENTTARHLRGTFREQKVDQQVQDNENAPQRCKESGELSEGSEKTSARRSSARKQKPTKDLLGSQMVTQTADYAEELLSQGQGTIQNLEESMHMQNTSISEDQGITEKKVNIIVYATKEKHSPKTPGKKAQPLEGPAGLKEHFETPNPKDKPITEDRTRVLCKSPQVTTENITTNTKPQTSTSGKKVDMKEESSALTKRIHMPGESRHNPKILKLECEDIKALKQSENEMLTSTVNGSKRTLEKSKKKAQPLEDLTCFQELFISPVPTNIIKKIPSKSPHTQPVRTPASTKRLSKTGLSKVDVRQEPSTLGKRTKSPGRAPGTPAPVQEENDSTAFMETPKQKLDFAGNSSGSKRRSRTSKNRSQPLEDLDGFQELFQTPAGASDSVTVEESAKISLESSQAEPVKTPASTKRRSKMSLMKVDMKELSILEKQTQSRGRDAGTPAPMQEGNGTTAIMETPKQKLDFTGNSTGHKRRPRTPKIRAQPLEDLDGFQELFQTPAGANDSVTVEESAKMSLESSQAEPVKTPASTKRLSKTDLSKVDVREDPSILGKKTKSPGRAPGTPAPVQEENDCTAYMETPKQKLESIENLTGLRKQSRTPKDITGFQDSFQIPDHANGPLVVVKTKKMFFNSPQPESAITRKSRERQSRASISKIDVKEELLESEEHLQLGEGVDTFQVSTNKVIRSSRKPAKRKLDSTAGMPNSKRMRCSSKDNTPCLEDLNGFQELFQMPGYANDSLTTGISTMLARSPQLGPVRTQINKKSLPKIILRKMDVTEEISGLWKQSLGRVHTTQEQEDNAIKAIMEIPKETLQTAADGTRLTRQPQTPKEKVQPLEDHSVFQELFQTSRYCSDPLIGNKQTRMSLRSPQPGFVRTPRTSKRLAKTSVGNIAVREKISPVSLPQCATGEVVHIPIGPEDDTENKGVKESTPQTLDSSASRTVSKRQQGAHEERPQFSGDLFHPQELFQTPASGKDPVTVDETTKIALQSPQPGHIINPASMKRQSNMSLRKDMREFSILEKQTQSRGRDAGTPAPMQEENGTTAIMETPKQKLDFIGNSTGHKRRPRTPKNRAQPLEDLDGFQELFQTPAGASDPVSVEESAKISLASSQAEPVRTPASTKRRSKTGLSKVDVRQEPSTLGKRMKSLGRAPGTPAPVQEENDSTAFMETPKQKLDFTGNSSGHKRRPQTPKIRAQPLEDLDGFQELFQTPAGANDSVTVEESVKMSLESSQAEPVKTPASTKRLSKTGLSKVDVREDPSILEKKTKSPGTPAPVQEENDCTAFMETPKQKLDFTGNSSGHKRRPRTPKIRAQPLEDLDGFQELFQTPAGASDSVTVEESAKMSLESSQAKPVKTPASTKRLSKTGLSKVDVREDPSTLGKKTKSPGRAPGTPAPVQEENDSTAFMETPKQKLDFAENSSGSKRRSRTSKNRSQPLEDLDGFQELFQTPAGASNPVSVEESAKISLESSQAEPVRTRASTKRLSKTGLNKMDVREGHSPLSKSSCASQKVMQTLTLGEDHGRETKDGKVLLAQKLEPAIYVTRGKRQQRSCKKRSQSPEDLSGVQEVFQTSGHNKDSVTVDNLAKLPSSSPPLEPTDTSVTSRRQARTGLRKVHVKNELSGGIMHPQISGEIVDLPREPEGEGKVIKTRKQSVKRKLDTEVNVPRSKRQRITRAEKTLEDLPGFQELCQAPSLVMDSVIVEKTPKMPDKSPEPVDTTSETQARRRLRRLVVTEEPIPQRKTTRVVRQTRNTQKEPISDNQGMEEFKESSVQKQDPSVSLTGRRNQPRTVKEKTQPLEELTSFQEETAKRISSKSPQPEEKETLAGLKRQLRIQLINDGVKEEPTAQRKQPSRETRNTLKEPVGDSINVEEVKKSTKQKIDPVASVPVSKRPRRVPKEKAQALELAGLKGPIQTLGHTDESASDKGPTQMPCNSLQPEQVDSFQSSPRRPRTRRGKVEADEEPSAVRKTVSTSRQTMRSRKVPEIGNNGTQVSKASIKQTLDTVAKVTGSRRQLRTHKDGVQPLEVLGDSKEITQISDHSEKLAHDTSILKSTQQQKPDSVKPLRTCRRVLRASKEDPKEVLVDTRDHATLQSKSNPLLSPKRKSARDGSIVRTRALRSLAPKQEATDEKPVPEKKRAASSKRHVSPEPVKMKHLKIVSNKLESVEEQVSTVMKTEEMEAKRENPVTPDQNSRYRKKTNVKQPRPKFDASAENVGIKKNEKTMKTASQETELQNPDDGAKKSTSRGQVSGKRTCLRSRGTTEMPQPCEAEEKTSKPAAEILIKPQEEKGVSGESDVRCLRSRKTRVALDSEPKPRVTRGTKKDAKTLKEDEDIVCTKKLRTRS</sequence>
<dbReference type="EMBL" id="X82786">
    <property type="protein sequence ID" value="CAA58026.1"/>
    <property type="status" value="ALT_FRAME"/>
    <property type="molecule type" value="mRNA"/>
</dbReference>
<dbReference type="EMBL" id="AC123047">
    <property type="status" value="NOT_ANNOTATED_CDS"/>
    <property type="molecule type" value="Genomic_DNA"/>
</dbReference>
<dbReference type="EMBL" id="BC053453">
    <property type="protein sequence ID" value="AAH53453.1"/>
    <property type="status" value="ALT_FRAME"/>
    <property type="molecule type" value="mRNA"/>
</dbReference>
<dbReference type="CCDS" id="CCDS52421.1">
    <molecule id="E9PVX6-1"/>
</dbReference>
<dbReference type="PIR" id="T30249">
    <property type="entry name" value="T30249"/>
</dbReference>
<dbReference type="RefSeq" id="NP_001074586.2">
    <molecule id="E9PVX6-1"/>
    <property type="nucleotide sequence ID" value="NM_001081117.2"/>
</dbReference>
<dbReference type="SMR" id="E9PVX6"/>
<dbReference type="FunCoup" id="E9PVX6">
    <property type="interactions" value="677"/>
</dbReference>
<dbReference type="IntAct" id="E9PVX6">
    <property type="interactions" value="18"/>
</dbReference>
<dbReference type="STRING" id="10090.ENSMUSP00000033310"/>
<dbReference type="GlyGen" id="E9PVX6">
    <property type="glycosylation" value="5 sites, 1 O-linked glycan (2 sites)"/>
</dbReference>
<dbReference type="iPTMnet" id="E9PVX6"/>
<dbReference type="PhosphoSitePlus" id="E9PVX6"/>
<dbReference type="jPOST" id="E9PVX6"/>
<dbReference type="PaxDb" id="10090-ENSMUSP00000033310"/>
<dbReference type="PeptideAtlas" id="E9PVX6"/>
<dbReference type="ProteomicsDB" id="263442">
    <molecule id="E9PVX6-1"/>
</dbReference>
<dbReference type="ProteomicsDB" id="263443">
    <molecule id="E9PVX6-2"/>
</dbReference>
<dbReference type="Pumba" id="E9PVX6"/>
<dbReference type="Antibodypedia" id="741">
    <property type="antibodies" value="2423 antibodies from 60 providers"/>
</dbReference>
<dbReference type="Ensembl" id="ENSMUST00000033310.9">
    <molecule id="E9PVX6-1"/>
    <property type="protein sequence ID" value="ENSMUSP00000033310.8"/>
    <property type="gene ID" value="ENSMUSG00000031004.9"/>
</dbReference>
<dbReference type="GeneID" id="17345"/>
<dbReference type="KEGG" id="mmu:17345"/>
<dbReference type="UCSC" id="uc009kem.2">
    <molecule id="E9PVX6-1"/>
    <property type="organism name" value="mouse"/>
</dbReference>
<dbReference type="AGR" id="MGI:106035"/>
<dbReference type="CTD" id="4288"/>
<dbReference type="MGI" id="MGI:106035">
    <property type="gene designation" value="Mki67"/>
</dbReference>
<dbReference type="VEuPathDB" id="HostDB:ENSMUSG00000031004"/>
<dbReference type="eggNOG" id="ENOG502QRVV">
    <property type="taxonomic scope" value="Eukaryota"/>
</dbReference>
<dbReference type="GeneTree" id="ENSGT00940000154352"/>
<dbReference type="HOGENOM" id="CLU_000534_0_0_1"/>
<dbReference type="InParanoid" id="E9PVX6"/>
<dbReference type="OMA" id="TPNHTDK"/>
<dbReference type="OrthoDB" id="6288785at2759"/>
<dbReference type="PhylomeDB" id="E9PVX6"/>
<dbReference type="TreeFam" id="TF336000"/>
<dbReference type="BioGRID-ORCS" id="17345">
    <property type="hits" value="6 hits in 78 CRISPR screens"/>
</dbReference>
<dbReference type="ChiTaRS" id="Mki67">
    <property type="organism name" value="mouse"/>
</dbReference>
<dbReference type="PRO" id="PR:E9PVX6"/>
<dbReference type="Proteomes" id="UP000000589">
    <property type="component" value="Chromosome 7"/>
</dbReference>
<dbReference type="RNAct" id="E9PVX6">
    <property type="molecule type" value="protein"/>
</dbReference>
<dbReference type="Bgee" id="ENSMUSG00000031004">
    <property type="expression patterns" value="Expressed in fetal liver hematopoietic progenitor cell and 233 other cell types or tissues"/>
</dbReference>
<dbReference type="ExpressionAtlas" id="E9PVX6">
    <property type="expression patterns" value="baseline and differential"/>
</dbReference>
<dbReference type="GO" id="GO:0000775">
    <property type="term" value="C:chromosome, centromeric region"/>
    <property type="evidence" value="ECO:0000314"/>
    <property type="project" value="MGI"/>
</dbReference>
<dbReference type="GO" id="GO:0000793">
    <property type="term" value="C:condensed chromosome"/>
    <property type="evidence" value="ECO:0000314"/>
    <property type="project" value="MGI"/>
</dbReference>
<dbReference type="GO" id="GO:0005737">
    <property type="term" value="C:cytoplasm"/>
    <property type="evidence" value="ECO:0000314"/>
    <property type="project" value="MGI"/>
</dbReference>
<dbReference type="GO" id="GO:0005730">
    <property type="term" value="C:nucleolus"/>
    <property type="evidence" value="ECO:0000314"/>
    <property type="project" value="MGI"/>
</dbReference>
<dbReference type="GO" id="GO:0005634">
    <property type="term" value="C:nucleus"/>
    <property type="evidence" value="ECO:0000314"/>
    <property type="project" value="MGI"/>
</dbReference>
<dbReference type="GO" id="GO:0005524">
    <property type="term" value="F:ATP binding"/>
    <property type="evidence" value="ECO:0007669"/>
    <property type="project" value="UniProtKB-KW"/>
</dbReference>
<dbReference type="GO" id="GO:0003677">
    <property type="term" value="F:DNA binding"/>
    <property type="evidence" value="ECO:0007669"/>
    <property type="project" value="UniProtKB-KW"/>
</dbReference>
<dbReference type="GO" id="GO:0140693">
    <property type="term" value="F:molecular condensate scaffold activity"/>
    <property type="evidence" value="ECO:0000250"/>
    <property type="project" value="UniProtKB"/>
</dbReference>
<dbReference type="GO" id="GO:0003723">
    <property type="term" value="F:RNA binding"/>
    <property type="evidence" value="ECO:0000250"/>
    <property type="project" value="UniProtKB"/>
</dbReference>
<dbReference type="GO" id="GO:0008283">
    <property type="term" value="P:cell population proliferation"/>
    <property type="evidence" value="ECO:0000314"/>
    <property type="project" value="MGI"/>
</dbReference>
<dbReference type="GO" id="GO:1990705">
    <property type="term" value="P:cholangiocyte proliferation"/>
    <property type="evidence" value="ECO:0000314"/>
    <property type="project" value="MGI"/>
</dbReference>
<dbReference type="GO" id="GO:0007059">
    <property type="term" value="P:chromosome segregation"/>
    <property type="evidence" value="ECO:0000250"/>
    <property type="project" value="UniProtKB"/>
</dbReference>
<dbReference type="GO" id="GO:0050673">
    <property type="term" value="P:epithelial cell proliferation"/>
    <property type="evidence" value="ECO:0000314"/>
    <property type="project" value="MGI"/>
</dbReference>
<dbReference type="GO" id="GO:0072574">
    <property type="term" value="P:hepatocyte proliferation"/>
    <property type="evidence" value="ECO:0000314"/>
    <property type="project" value="MGI"/>
</dbReference>
<dbReference type="GO" id="GO:0051321">
    <property type="term" value="P:meiotic cell cycle"/>
    <property type="evidence" value="ECO:0000314"/>
    <property type="project" value="MGI"/>
</dbReference>
<dbReference type="GO" id="GO:1902275">
    <property type="term" value="P:regulation of chromatin organization"/>
    <property type="evidence" value="ECO:0000315"/>
    <property type="project" value="UniProtKB"/>
</dbReference>
<dbReference type="GO" id="GO:0007088">
    <property type="term" value="P:regulation of mitotic nuclear division"/>
    <property type="evidence" value="ECO:0000250"/>
    <property type="project" value="UniProtKB"/>
</dbReference>
<dbReference type="GO" id="GO:0072089">
    <property type="term" value="P:stem cell proliferation"/>
    <property type="evidence" value="ECO:0000314"/>
    <property type="project" value="MGI"/>
</dbReference>
<dbReference type="CDD" id="cd22673">
    <property type="entry name" value="FHA_Ki67"/>
    <property type="match status" value="1"/>
</dbReference>
<dbReference type="Gene3D" id="2.60.200.20">
    <property type="match status" value="1"/>
</dbReference>
<dbReference type="InterPro" id="IPR000253">
    <property type="entry name" value="FHA_dom"/>
</dbReference>
<dbReference type="InterPro" id="IPR012568">
    <property type="entry name" value="KI67R"/>
</dbReference>
<dbReference type="InterPro" id="IPR029334">
    <property type="entry name" value="PP1-bd"/>
</dbReference>
<dbReference type="InterPro" id="IPR008984">
    <property type="entry name" value="SMAD_FHA_dom_sf"/>
</dbReference>
<dbReference type="PANTHER" id="PTHR21603">
    <property type="entry name" value="ANTIGEN KI-67-LIKE PROTEIN"/>
    <property type="match status" value="1"/>
</dbReference>
<dbReference type="PANTHER" id="PTHR21603:SF17">
    <property type="entry name" value="PROLIFERATION MARKER PROTEIN KI-67"/>
    <property type="match status" value="1"/>
</dbReference>
<dbReference type="Pfam" id="PF00498">
    <property type="entry name" value="FHA"/>
    <property type="match status" value="1"/>
</dbReference>
<dbReference type="Pfam" id="PF08065">
    <property type="entry name" value="KI67R"/>
    <property type="match status" value="16"/>
</dbReference>
<dbReference type="Pfam" id="PF15276">
    <property type="entry name" value="PP1_bind"/>
    <property type="match status" value="1"/>
</dbReference>
<dbReference type="SMART" id="SM00240">
    <property type="entry name" value="FHA"/>
    <property type="match status" value="1"/>
</dbReference>
<dbReference type="SMART" id="SM01295">
    <property type="entry name" value="K167R"/>
    <property type="match status" value="16"/>
</dbReference>
<dbReference type="SUPFAM" id="SSF49879">
    <property type="entry name" value="SMAD/FHA domain"/>
    <property type="match status" value="1"/>
</dbReference>
<dbReference type="PROSITE" id="PS50006">
    <property type="entry name" value="FHA_DOMAIN"/>
    <property type="match status" value="1"/>
</dbReference>
<organism>
    <name type="scientific">Mus musculus</name>
    <name type="common">Mouse</name>
    <dbReference type="NCBI Taxonomy" id="10090"/>
    <lineage>
        <taxon>Eukaryota</taxon>
        <taxon>Metazoa</taxon>
        <taxon>Chordata</taxon>
        <taxon>Craniata</taxon>
        <taxon>Vertebrata</taxon>
        <taxon>Euteleostomi</taxon>
        <taxon>Mammalia</taxon>
        <taxon>Eutheria</taxon>
        <taxon>Euarchontoglires</taxon>
        <taxon>Glires</taxon>
        <taxon>Rodentia</taxon>
        <taxon>Myomorpha</taxon>
        <taxon>Muroidea</taxon>
        <taxon>Muridae</taxon>
        <taxon>Murinae</taxon>
        <taxon>Mus</taxon>
        <taxon>Mus</taxon>
    </lineage>
</organism>
<keyword id="KW-0007">Acetylation</keyword>
<keyword id="KW-0025">Alternative splicing</keyword>
<keyword id="KW-0067">ATP-binding</keyword>
<keyword id="KW-0131">Cell cycle</keyword>
<keyword id="KW-0158">Chromosome</keyword>
<keyword id="KW-0238">DNA-binding</keyword>
<keyword id="KW-1017">Isopeptide bond</keyword>
<keyword id="KW-0547">Nucleotide-binding</keyword>
<keyword id="KW-0539">Nucleus</keyword>
<keyword id="KW-0597">Phosphoprotein</keyword>
<keyword id="KW-1185">Reference proteome</keyword>
<keyword id="KW-0677">Repeat</keyword>
<keyword id="KW-0832">Ubl conjugation</keyword>
<evidence type="ECO:0000250" key="1">
    <source>
        <dbReference type="UniProtKB" id="P46013"/>
    </source>
</evidence>
<evidence type="ECO:0000255" key="2"/>
<evidence type="ECO:0000255" key="3">
    <source>
        <dbReference type="PROSITE-ProRule" id="PRU00086"/>
    </source>
</evidence>
<evidence type="ECO:0000256" key="4">
    <source>
        <dbReference type="SAM" id="MobiDB-lite"/>
    </source>
</evidence>
<evidence type="ECO:0000269" key="5">
    <source>
    </source>
</evidence>
<evidence type="ECO:0000269" key="6">
    <source>
    </source>
</evidence>
<evidence type="ECO:0000269" key="7">
    <source>
    </source>
</evidence>
<evidence type="ECO:0000269" key="8">
    <source>
    </source>
</evidence>
<evidence type="ECO:0000269" key="9">
    <source>
    </source>
</evidence>
<evidence type="ECO:0000305" key="10"/>
<evidence type="ECO:0000312" key="11">
    <source>
        <dbReference type="MGI" id="MGI:106035"/>
    </source>
</evidence>
<evidence type="ECO:0007744" key="12">
    <source>
    </source>
</evidence>
<evidence type="ECO:0007744" key="13">
    <source>
    </source>
</evidence>
<evidence type="ECO:0007744" key="14">
    <source>
    </source>
</evidence>
<proteinExistence type="evidence at protein level"/>
<protein>
    <recommendedName>
        <fullName evidence="10">Proliferation marker protein Ki-67</fullName>
    </recommendedName>
    <alternativeName>
        <fullName evidence="10">Antigen identified by monoclonal antibody Ki-67 homolog</fullName>
        <shortName evidence="10">Antigen KI-67 homolog</shortName>
        <shortName evidence="10">Antigen Ki67 homolog</shortName>
    </alternativeName>
</protein>